<protein>
    <recommendedName>
        <fullName evidence="1">Molybdenum cofactor guanylyltransferase</fullName>
        <shortName evidence="1">MoCo guanylyltransferase</shortName>
        <ecNumber evidence="1">2.7.7.77</ecNumber>
    </recommendedName>
    <alternativeName>
        <fullName evidence="1">GTP:molybdopterin guanylyltransferase</fullName>
    </alternativeName>
    <alternativeName>
        <fullName evidence="1">Mo-MPT guanylyltransferase</fullName>
    </alternativeName>
    <alternativeName>
        <fullName evidence="1">Molybdopterin guanylyltransferase</fullName>
    </alternativeName>
    <alternativeName>
        <fullName evidence="1">Molybdopterin-guanine dinucleotide synthase</fullName>
        <shortName evidence="1">MGD synthase</shortName>
    </alternativeName>
</protein>
<feature type="chain" id="PRO_1000019103" description="Molybdenum cofactor guanylyltransferase">
    <location>
        <begin position="1"/>
        <end position="197"/>
    </location>
</feature>
<feature type="binding site" evidence="1">
    <location>
        <begin position="12"/>
        <end position="14"/>
    </location>
    <ligand>
        <name>GTP</name>
        <dbReference type="ChEBI" id="CHEBI:37565"/>
    </ligand>
</feature>
<feature type="binding site" evidence="1">
    <location>
        <position position="25"/>
    </location>
    <ligand>
        <name>GTP</name>
        <dbReference type="ChEBI" id="CHEBI:37565"/>
    </ligand>
</feature>
<feature type="binding site" evidence="1">
    <location>
        <position position="53"/>
    </location>
    <ligand>
        <name>GTP</name>
        <dbReference type="ChEBI" id="CHEBI:37565"/>
    </ligand>
</feature>
<feature type="binding site" evidence="1">
    <location>
        <position position="71"/>
    </location>
    <ligand>
        <name>GTP</name>
        <dbReference type="ChEBI" id="CHEBI:37565"/>
    </ligand>
</feature>
<feature type="binding site" evidence="1">
    <location>
        <position position="101"/>
    </location>
    <ligand>
        <name>GTP</name>
        <dbReference type="ChEBI" id="CHEBI:37565"/>
    </ligand>
</feature>
<feature type="binding site" evidence="1">
    <location>
        <position position="101"/>
    </location>
    <ligand>
        <name>Mg(2+)</name>
        <dbReference type="ChEBI" id="CHEBI:18420"/>
    </ligand>
</feature>
<name>MOBA_BORPE</name>
<reference key="1">
    <citation type="journal article" date="2003" name="Nat. Genet.">
        <title>Comparative analysis of the genome sequences of Bordetella pertussis, Bordetella parapertussis and Bordetella bronchiseptica.</title>
        <authorList>
            <person name="Parkhill J."/>
            <person name="Sebaihia M."/>
            <person name="Preston A."/>
            <person name="Murphy L.D."/>
            <person name="Thomson N.R."/>
            <person name="Harris D.E."/>
            <person name="Holden M.T.G."/>
            <person name="Churcher C.M."/>
            <person name="Bentley S.D."/>
            <person name="Mungall K.L."/>
            <person name="Cerdeno-Tarraga A.-M."/>
            <person name="Temple L."/>
            <person name="James K.D."/>
            <person name="Harris B."/>
            <person name="Quail M.A."/>
            <person name="Achtman M."/>
            <person name="Atkin R."/>
            <person name="Baker S."/>
            <person name="Basham D."/>
            <person name="Bason N."/>
            <person name="Cherevach I."/>
            <person name="Chillingworth T."/>
            <person name="Collins M."/>
            <person name="Cronin A."/>
            <person name="Davis P."/>
            <person name="Doggett J."/>
            <person name="Feltwell T."/>
            <person name="Goble A."/>
            <person name="Hamlin N."/>
            <person name="Hauser H."/>
            <person name="Holroyd S."/>
            <person name="Jagels K."/>
            <person name="Leather S."/>
            <person name="Moule S."/>
            <person name="Norberczak H."/>
            <person name="O'Neil S."/>
            <person name="Ormond D."/>
            <person name="Price C."/>
            <person name="Rabbinowitsch E."/>
            <person name="Rutter S."/>
            <person name="Sanders M."/>
            <person name="Saunders D."/>
            <person name="Seeger K."/>
            <person name="Sharp S."/>
            <person name="Simmonds M."/>
            <person name="Skelton J."/>
            <person name="Squares R."/>
            <person name="Squares S."/>
            <person name="Stevens K."/>
            <person name="Unwin L."/>
            <person name="Whitehead S."/>
            <person name="Barrell B.G."/>
            <person name="Maskell D.J."/>
        </authorList>
    </citation>
    <scope>NUCLEOTIDE SEQUENCE [LARGE SCALE GENOMIC DNA]</scope>
    <source>
        <strain>Tohama I / ATCC BAA-589 / NCTC 13251</strain>
    </source>
</reference>
<comment type="function">
    <text evidence="1">Transfers a GMP moiety from GTP to Mo-molybdopterin (Mo-MPT) cofactor (Moco or molybdenum cofactor) to form Mo-molybdopterin guanine dinucleotide (Mo-MGD) cofactor.</text>
</comment>
<comment type="catalytic activity">
    <reaction evidence="1">
        <text>Mo-molybdopterin + GTP + H(+) = Mo-molybdopterin guanine dinucleotide + diphosphate</text>
        <dbReference type="Rhea" id="RHEA:34243"/>
        <dbReference type="ChEBI" id="CHEBI:15378"/>
        <dbReference type="ChEBI" id="CHEBI:33019"/>
        <dbReference type="ChEBI" id="CHEBI:37565"/>
        <dbReference type="ChEBI" id="CHEBI:71302"/>
        <dbReference type="ChEBI" id="CHEBI:71310"/>
        <dbReference type="EC" id="2.7.7.77"/>
    </reaction>
</comment>
<comment type="cofactor">
    <cofactor evidence="1">
        <name>Mg(2+)</name>
        <dbReference type="ChEBI" id="CHEBI:18420"/>
    </cofactor>
</comment>
<comment type="subunit">
    <text evidence="1">Monomer.</text>
</comment>
<comment type="subcellular location">
    <subcellularLocation>
        <location evidence="1">Cytoplasm</location>
    </subcellularLocation>
</comment>
<comment type="domain">
    <text evidence="1">The N-terminal domain determines nucleotide recognition and specific binding, while the C-terminal domain determines the specific binding to the target protein.</text>
</comment>
<comment type="similarity">
    <text evidence="1">Belongs to the MobA family.</text>
</comment>
<gene>
    <name evidence="1" type="primary">mobA</name>
    <name type="ordered locus">BP1466</name>
</gene>
<organism>
    <name type="scientific">Bordetella pertussis (strain Tohama I / ATCC BAA-589 / NCTC 13251)</name>
    <dbReference type="NCBI Taxonomy" id="257313"/>
    <lineage>
        <taxon>Bacteria</taxon>
        <taxon>Pseudomonadati</taxon>
        <taxon>Pseudomonadota</taxon>
        <taxon>Betaproteobacteria</taxon>
        <taxon>Burkholderiales</taxon>
        <taxon>Alcaligenaceae</taxon>
        <taxon>Bordetella</taxon>
    </lineage>
</organism>
<evidence type="ECO:0000255" key="1">
    <source>
        <dbReference type="HAMAP-Rule" id="MF_00316"/>
    </source>
</evidence>
<accession>Q7VY88</accession>
<sequence length="197" mass="21179">MIDKNDITGLILAGGRASRMGSVDKGLQNFHGMPLAMHTLLRLGPQVGDIMINANRNLAAYEAMGAPVWPDALPDFPGPLAGFAAGLERCETPYMVTAPCDTPNFPADMVSRLADALIAEGAQIAMAATTADGALRTQPVFCLMRIDLLDSLLEFLHSGQRKTEIWANQHRCAIVRFDDAQAFAGANTLAELRQLQS</sequence>
<keyword id="KW-0963">Cytoplasm</keyword>
<keyword id="KW-0342">GTP-binding</keyword>
<keyword id="KW-0460">Magnesium</keyword>
<keyword id="KW-0479">Metal-binding</keyword>
<keyword id="KW-0501">Molybdenum cofactor biosynthesis</keyword>
<keyword id="KW-0547">Nucleotide-binding</keyword>
<keyword id="KW-1185">Reference proteome</keyword>
<keyword id="KW-0808">Transferase</keyword>
<proteinExistence type="inferred from homology"/>
<dbReference type="EC" id="2.7.7.77" evidence="1"/>
<dbReference type="EMBL" id="BX640415">
    <property type="protein sequence ID" value="CAE41755.1"/>
    <property type="molecule type" value="Genomic_DNA"/>
</dbReference>
<dbReference type="RefSeq" id="NP_880205.1">
    <property type="nucleotide sequence ID" value="NC_002929.2"/>
</dbReference>
<dbReference type="RefSeq" id="WP_010930371.1">
    <property type="nucleotide sequence ID" value="NZ_CP039022.1"/>
</dbReference>
<dbReference type="SMR" id="Q7VY88"/>
<dbReference type="STRING" id="257313.BP1466"/>
<dbReference type="PaxDb" id="257313-BP1466"/>
<dbReference type="GeneID" id="69601379"/>
<dbReference type="KEGG" id="bpe:BP1466"/>
<dbReference type="PATRIC" id="fig|257313.5.peg.1572"/>
<dbReference type="eggNOG" id="COG0746">
    <property type="taxonomic scope" value="Bacteria"/>
</dbReference>
<dbReference type="HOGENOM" id="CLU_055597_5_1_4"/>
<dbReference type="Proteomes" id="UP000002676">
    <property type="component" value="Chromosome"/>
</dbReference>
<dbReference type="GO" id="GO:0005737">
    <property type="term" value="C:cytoplasm"/>
    <property type="evidence" value="ECO:0007669"/>
    <property type="project" value="UniProtKB-SubCell"/>
</dbReference>
<dbReference type="GO" id="GO:0005525">
    <property type="term" value="F:GTP binding"/>
    <property type="evidence" value="ECO:0007669"/>
    <property type="project" value="UniProtKB-UniRule"/>
</dbReference>
<dbReference type="GO" id="GO:0046872">
    <property type="term" value="F:metal ion binding"/>
    <property type="evidence" value="ECO:0007669"/>
    <property type="project" value="UniProtKB-KW"/>
</dbReference>
<dbReference type="GO" id="GO:0061603">
    <property type="term" value="F:molybdenum cofactor guanylyltransferase activity"/>
    <property type="evidence" value="ECO:0007669"/>
    <property type="project" value="UniProtKB-EC"/>
</dbReference>
<dbReference type="GO" id="GO:1902758">
    <property type="term" value="P:bis(molybdopterin guanine dinucleotide)molybdenum biosynthetic process"/>
    <property type="evidence" value="ECO:0007669"/>
    <property type="project" value="TreeGrafter"/>
</dbReference>
<dbReference type="CDD" id="cd02503">
    <property type="entry name" value="MobA"/>
    <property type="match status" value="1"/>
</dbReference>
<dbReference type="Gene3D" id="3.90.550.10">
    <property type="entry name" value="Spore Coat Polysaccharide Biosynthesis Protein SpsA, Chain A"/>
    <property type="match status" value="1"/>
</dbReference>
<dbReference type="HAMAP" id="MF_00316">
    <property type="entry name" value="MobA"/>
    <property type="match status" value="1"/>
</dbReference>
<dbReference type="InterPro" id="IPR025877">
    <property type="entry name" value="MobA-like_NTP_Trfase"/>
</dbReference>
<dbReference type="InterPro" id="IPR013482">
    <property type="entry name" value="Molybde_CF_guanTrfase"/>
</dbReference>
<dbReference type="InterPro" id="IPR029044">
    <property type="entry name" value="Nucleotide-diphossugar_trans"/>
</dbReference>
<dbReference type="NCBIfam" id="TIGR02665">
    <property type="entry name" value="molyb_mobA"/>
    <property type="match status" value="1"/>
</dbReference>
<dbReference type="PANTHER" id="PTHR19136">
    <property type="entry name" value="MOLYBDENUM COFACTOR GUANYLYLTRANSFERASE"/>
    <property type="match status" value="1"/>
</dbReference>
<dbReference type="PANTHER" id="PTHR19136:SF81">
    <property type="entry name" value="MOLYBDENUM COFACTOR GUANYLYLTRANSFERASE"/>
    <property type="match status" value="1"/>
</dbReference>
<dbReference type="Pfam" id="PF12804">
    <property type="entry name" value="NTP_transf_3"/>
    <property type="match status" value="1"/>
</dbReference>
<dbReference type="SUPFAM" id="SSF53448">
    <property type="entry name" value="Nucleotide-diphospho-sugar transferases"/>
    <property type="match status" value="1"/>
</dbReference>